<dbReference type="EC" id="1.1.1.290" evidence="1"/>
<dbReference type="EMBL" id="CP001048">
    <property type="protein sequence ID" value="ACC89675.1"/>
    <property type="molecule type" value="Genomic_DNA"/>
</dbReference>
<dbReference type="RefSeq" id="WP_002209725.1">
    <property type="nucleotide sequence ID" value="NZ_CP009780.1"/>
</dbReference>
<dbReference type="SMR" id="B2K8H7"/>
<dbReference type="GeneID" id="57975926"/>
<dbReference type="KEGG" id="ypb:YPTS_2715"/>
<dbReference type="PATRIC" id="fig|502801.10.peg.2138"/>
<dbReference type="UniPathway" id="UPA00244">
    <property type="reaction ID" value="UER00310"/>
</dbReference>
<dbReference type="GO" id="GO:0005829">
    <property type="term" value="C:cytosol"/>
    <property type="evidence" value="ECO:0007669"/>
    <property type="project" value="TreeGrafter"/>
</dbReference>
<dbReference type="GO" id="GO:0033711">
    <property type="term" value="F:4-phosphoerythronate dehydrogenase activity"/>
    <property type="evidence" value="ECO:0007669"/>
    <property type="project" value="UniProtKB-EC"/>
</dbReference>
<dbReference type="GO" id="GO:0051287">
    <property type="term" value="F:NAD binding"/>
    <property type="evidence" value="ECO:0007669"/>
    <property type="project" value="InterPro"/>
</dbReference>
<dbReference type="GO" id="GO:0046983">
    <property type="term" value="F:protein dimerization activity"/>
    <property type="evidence" value="ECO:0007669"/>
    <property type="project" value="InterPro"/>
</dbReference>
<dbReference type="GO" id="GO:0036001">
    <property type="term" value="P:'de novo' pyridoxal 5'-phosphate biosynthetic process"/>
    <property type="evidence" value="ECO:0007669"/>
    <property type="project" value="TreeGrafter"/>
</dbReference>
<dbReference type="GO" id="GO:0008615">
    <property type="term" value="P:pyridoxine biosynthetic process"/>
    <property type="evidence" value="ECO:0007669"/>
    <property type="project" value="UniProtKB-UniRule"/>
</dbReference>
<dbReference type="CDD" id="cd12158">
    <property type="entry name" value="ErythrP_dh"/>
    <property type="match status" value="1"/>
</dbReference>
<dbReference type="FunFam" id="3.30.1370.170:FF:000001">
    <property type="entry name" value="Erythronate-4-phosphate dehydrogenase"/>
    <property type="match status" value="1"/>
</dbReference>
<dbReference type="FunFam" id="3.40.50.720:FF:000093">
    <property type="entry name" value="Erythronate-4-phosphate dehydrogenase"/>
    <property type="match status" value="1"/>
</dbReference>
<dbReference type="Gene3D" id="3.30.1370.170">
    <property type="match status" value="1"/>
</dbReference>
<dbReference type="Gene3D" id="3.40.50.720">
    <property type="entry name" value="NAD(P)-binding Rossmann-like Domain"/>
    <property type="match status" value="2"/>
</dbReference>
<dbReference type="HAMAP" id="MF_01825">
    <property type="entry name" value="PdxB"/>
    <property type="match status" value="1"/>
</dbReference>
<dbReference type="InterPro" id="IPR006139">
    <property type="entry name" value="D-isomer_2_OHA_DH_cat_dom"/>
</dbReference>
<dbReference type="InterPro" id="IPR029753">
    <property type="entry name" value="D-isomer_DH_CS"/>
</dbReference>
<dbReference type="InterPro" id="IPR029752">
    <property type="entry name" value="D-isomer_DH_CS1"/>
</dbReference>
<dbReference type="InterPro" id="IPR006140">
    <property type="entry name" value="D-isomer_DH_NAD-bd"/>
</dbReference>
<dbReference type="InterPro" id="IPR020921">
    <property type="entry name" value="Erythronate-4-P_DHase"/>
</dbReference>
<dbReference type="InterPro" id="IPR024531">
    <property type="entry name" value="Erythronate-4-P_DHase_dimer"/>
</dbReference>
<dbReference type="InterPro" id="IPR036291">
    <property type="entry name" value="NAD(P)-bd_dom_sf"/>
</dbReference>
<dbReference type="InterPro" id="IPR038251">
    <property type="entry name" value="PdxB_dimer_sf"/>
</dbReference>
<dbReference type="NCBIfam" id="NF001309">
    <property type="entry name" value="PRK00257.1"/>
    <property type="match status" value="1"/>
</dbReference>
<dbReference type="PANTHER" id="PTHR42938">
    <property type="entry name" value="FORMATE DEHYDROGENASE 1"/>
    <property type="match status" value="1"/>
</dbReference>
<dbReference type="PANTHER" id="PTHR42938:SF9">
    <property type="entry name" value="FORMATE DEHYDROGENASE 1"/>
    <property type="match status" value="1"/>
</dbReference>
<dbReference type="Pfam" id="PF00389">
    <property type="entry name" value="2-Hacid_dh"/>
    <property type="match status" value="1"/>
</dbReference>
<dbReference type="Pfam" id="PF02826">
    <property type="entry name" value="2-Hacid_dh_C"/>
    <property type="match status" value="1"/>
</dbReference>
<dbReference type="Pfam" id="PF11890">
    <property type="entry name" value="DUF3410"/>
    <property type="match status" value="1"/>
</dbReference>
<dbReference type="SUPFAM" id="SSF52283">
    <property type="entry name" value="Formate/glycerate dehydrogenase catalytic domain-like"/>
    <property type="match status" value="1"/>
</dbReference>
<dbReference type="SUPFAM" id="SSF51735">
    <property type="entry name" value="NAD(P)-binding Rossmann-fold domains"/>
    <property type="match status" value="1"/>
</dbReference>
<dbReference type="PROSITE" id="PS00065">
    <property type="entry name" value="D_2_HYDROXYACID_DH_1"/>
    <property type="match status" value="1"/>
</dbReference>
<dbReference type="PROSITE" id="PS00671">
    <property type="entry name" value="D_2_HYDROXYACID_DH_3"/>
    <property type="match status" value="1"/>
</dbReference>
<gene>
    <name evidence="1" type="primary">pdxB</name>
    <name type="ordered locus">YPTS_2715</name>
</gene>
<accession>B2K8H7</accession>
<evidence type="ECO:0000255" key="1">
    <source>
        <dbReference type="HAMAP-Rule" id="MF_01825"/>
    </source>
</evidence>
<feature type="chain" id="PRO_1000188288" description="Erythronate-4-phosphate dehydrogenase">
    <location>
        <begin position="1"/>
        <end position="375"/>
    </location>
</feature>
<feature type="active site" evidence="1">
    <location>
        <position position="208"/>
    </location>
</feature>
<feature type="active site" evidence="1">
    <location>
        <position position="237"/>
    </location>
</feature>
<feature type="active site" description="Proton donor" evidence="1">
    <location>
        <position position="254"/>
    </location>
</feature>
<feature type="binding site" evidence="1">
    <location>
        <position position="45"/>
    </location>
    <ligand>
        <name>substrate</name>
    </ligand>
</feature>
<feature type="binding site" evidence="1">
    <location>
        <position position="66"/>
    </location>
    <ligand>
        <name>substrate</name>
    </ligand>
</feature>
<feature type="binding site" evidence="1">
    <location>
        <position position="146"/>
    </location>
    <ligand>
        <name>NAD(+)</name>
        <dbReference type="ChEBI" id="CHEBI:57540"/>
    </ligand>
</feature>
<feature type="binding site" evidence="1">
    <location>
        <position position="175"/>
    </location>
    <ligand>
        <name>NAD(+)</name>
        <dbReference type="ChEBI" id="CHEBI:57540"/>
    </ligand>
</feature>
<feature type="binding site" evidence="1">
    <location>
        <position position="232"/>
    </location>
    <ligand>
        <name>NAD(+)</name>
        <dbReference type="ChEBI" id="CHEBI:57540"/>
    </ligand>
</feature>
<feature type="binding site" evidence="1">
    <location>
        <position position="257"/>
    </location>
    <ligand>
        <name>NAD(+)</name>
        <dbReference type="ChEBI" id="CHEBI:57540"/>
    </ligand>
</feature>
<feature type="binding site" evidence="1">
    <location>
        <position position="258"/>
    </location>
    <ligand>
        <name>substrate</name>
    </ligand>
</feature>
<reference key="1">
    <citation type="submission" date="2008-04" db="EMBL/GenBank/DDBJ databases">
        <title>Complete sequence of Yersinia pseudotuberculosis PB1/+.</title>
        <authorList>
            <person name="Copeland A."/>
            <person name="Lucas S."/>
            <person name="Lapidus A."/>
            <person name="Glavina del Rio T."/>
            <person name="Dalin E."/>
            <person name="Tice H."/>
            <person name="Bruce D."/>
            <person name="Goodwin L."/>
            <person name="Pitluck S."/>
            <person name="Munk A.C."/>
            <person name="Brettin T."/>
            <person name="Detter J.C."/>
            <person name="Han C."/>
            <person name="Tapia R."/>
            <person name="Schmutz J."/>
            <person name="Larimer F."/>
            <person name="Land M."/>
            <person name="Hauser L."/>
            <person name="Challacombe J.F."/>
            <person name="Green L."/>
            <person name="Lindler L.E."/>
            <person name="Nikolich M.P."/>
            <person name="Richardson P."/>
        </authorList>
    </citation>
    <scope>NUCLEOTIDE SEQUENCE [LARGE SCALE GENOMIC DNA]</scope>
    <source>
        <strain>PB1/+</strain>
    </source>
</reference>
<proteinExistence type="inferred from homology"/>
<comment type="function">
    <text evidence="1">Catalyzes the oxidation of erythronate-4-phosphate to 3-hydroxy-2-oxo-4-phosphonooxybutanoate.</text>
</comment>
<comment type="catalytic activity">
    <reaction evidence="1">
        <text>4-phospho-D-erythronate + NAD(+) = (R)-3-hydroxy-2-oxo-4-phosphooxybutanoate + NADH + H(+)</text>
        <dbReference type="Rhea" id="RHEA:18829"/>
        <dbReference type="ChEBI" id="CHEBI:15378"/>
        <dbReference type="ChEBI" id="CHEBI:57540"/>
        <dbReference type="ChEBI" id="CHEBI:57945"/>
        <dbReference type="ChEBI" id="CHEBI:58538"/>
        <dbReference type="ChEBI" id="CHEBI:58766"/>
        <dbReference type="EC" id="1.1.1.290"/>
    </reaction>
</comment>
<comment type="pathway">
    <text evidence="1">Cofactor biosynthesis; pyridoxine 5'-phosphate biosynthesis; pyridoxine 5'-phosphate from D-erythrose 4-phosphate: step 2/5.</text>
</comment>
<comment type="subunit">
    <text evidence="1">Homodimer.</text>
</comment>
<comment type="subcellular location">
    <subcellularLocation>
        <location evidence="1">Cytoplasm</location>
    </subcellularLocation>
</comment>
<comment type="similarity">
    <text evidence="1">Belongs to the D-isomer specific 2-hydroxyacid dehydrogenase family. PdxB subfamily.</text>
</comment>
<sequence>MKILVDENMPYAEELFRRLGDVQAVPGRPIPRDALVDADALMVRSVTKVNEALLHGTSIGFVGTATAGTDHVDDTWLRQQGIGFSAAPGCNAIAVVEYVFSALMMMAERDGFQLRDKTVGIIGVGNVGSRLNARLQALGVRTLLCDPPRADRGDNEAFWPLEKLVREADVLTFHTPLNKTGAYQSLHMADDELLAALPDGRILINACRGAVVDNAALLRALEKGKKLSVVLDVWEPEPDLSLPLLARVDIGTPHIAGYTLEGKARGTTQVFEAFSQHLGQPQSVELASLLPVPEFSHLRLNGELDEGKLKRLMHLVYDVRRDDAPLRHVAGLPGEFDRLRKHYQERREWSSLCVQCDDATSAGLLQQLGFTTQLL</sequence>
<keyword id="KW-0963">Cytoplasm</keyword>
<keyword id="KW-0520">NAD</keyword>
<keyword id="KW-0560">Oxidoreductase</keyword>
<keyword id="KW-0664">Pyridoxine biosynthesis</keyword>
<protein>
    <recommendedName>
        <fullName evidence="1">Erythronate-4-phosphate dehydrogenase</fullName>
        <ecNumber evidence="1">1.1.1.290</ecNumber>
    </recommendedName>
</protein>
<organism>
    <name type="scientific">Yersinia pseudotuberculosis serotype IB (strain PB1/+)</name>
    <dbReference type="NCBI Taxonomy" id="502801"/>
    <lineage>
        <taxon>Bacteria</taxon>
        <taxon>Pseudomonadati</taxon>
        <taxon>Pseudomonadota</taxon>
        <taxon>Gammaproteobacteria</taxon>
        <taxon>Enterobacterales</taxon>
        <taxon>Yersiniaceae</taxon>
        <taxon>Yersinia</taxon>
    </lineage>
</organism>
<name>PDXB_YERPB</name>